<keyword id="KW-0963">Cytoplasm</keyword>
<keyword id="KW-0320">Glycogen biosynthesis</keyword>
<keyword id="KW-0328">Glycosyltransferase</keyword>
<keyword id="KW-1185">Reference proteome</keyword>
<keyword id="KW-0808">Transferase</keyword>
<evidence type="ECO:0000250" key="1">
    <source>
        <dbReference type="UniProtKB" id="P32775"/>
    </source>
</evidence>
<evidence type="ECO:0000250" key="2">
    <source>
        <dbReference type="UniProtKB" id="Q04446"/>
    </source>
</evidence>
<evidence type="ECO:0000250" key="3">
    <source>
        <dbReference type="UniProtKB" id="Q6FJV0"/>
    </source>
</evidence>
<evidence type="ECO:0000305" key="4"/>
<name>GLGB_DEBHA</name>
<comment type="function">
    <text evidence="2">Glycogen-branching enzyme participates in the glycogen biosynthetic process along with glycogenin and glycogen synthase. Generates alpha-1,6-glucosidic branches from alpha-1,4-linked glucose chains, to increase solubility of the glycogen polymer.</text>
</comment>
<comment type="catalytic activity">
    <reaction evidence="2">
        <text>Transfers a segment of a (1-&gt;4)-alpha-D-glucan chain to a primary hydroxy group in a similar glucan chain.</text>
        <dbReference type="EC" id="2.4.1.18"/>
    </reaction>
</comment>
<comment type="pathway">
    <text evidence="2">Glycan biosynthesis; glycogen biosynthesis.</text>
</comment>
<comment type="subcellular location">
    <subcellularLocation>
        <location evidence="1">Cytoplasm</location>
    </subcellularLocation>
    <text evidence="1">Localizes to glycogen granules in the cytoplasm.</text>
</comment>
<comment type="similarity">
    <text evidence="4">Belongs to the glycosyl hydrolase 13 family. GlgB subfamily.</text>
</comment>
<dbReference type="EC" id="2.4.1.18" evidence="2"/>
<dbReference type="EMBL" id="CR382134">
    <property type="protein sequence ID" value="CAG85024.1"/>
    <property type="molecule type" value="Genomic_DNA"/>
</dbReference>
<dbReference type="RefSeq" id="XP_457038.1">
    <property type="nucleotide sequence ID" value="XM_457038.1"/>
</dbReference>
<dbReference type="SMR" id="Q6BXN1"/>
<dbReference type="FunCoup" id="Q6BXN1">
    <property type="interactions" value="472"/>
</dbReference>
<dbReference type="STRING" id="284592.Q6BXN1"/>
<dbReference type="CAZy" id="CBM48">
    <property type="family name" value="Carbohydrate-Binding Module Family 48"/>
</dbReference>
<dbReference type="CAZy" id="GH13">
    <property type="family name" value="Glycoside Hydrolase Family 13"/>
</dbReference>
<dbReference type="GeneID" id="2913696"/>
<dbReference type="KEGG" id="dha:DEHA2B01672g"/>
<dbReference type="VEuPathDB" id="FungiDB:DEHA2B01672g"/>
<dbReference type="eggNOG" id="KOG0470">
    <property type="taxonomic scope" value="Eukaryota"/>
</dbReference>
<dbReference type="HOGENOM" id="CLU_011131_2_2_1"/>
<dbReference type="InParanoid" id="Q6BXN1"/>
<dbReference type="OMA" id="YEMHLGS"/>
<dbReference type="OrthoDB" id="196493at2759"/>
<dbReference type="UniPathway" id="UPA00164"/>
<dbReference type="Proteomes" id="UP000000599">
    <property type="component" value="Chromosome B"/>
</dbReference>
<dbReference type="GO" id="GO:0005737">
    <property type="term" value="C:cytoplasm"/>
    <property type="evidence" value="ECO:0000250"/>
    <property type="project" value="UniProtKB"/>
</dbReference>
<dbReference type="GO" id="GO:0003844">
    <property type="term" value="F:1,4-alpha-glucan branching enzyme activity"/>
    <property type="evidence" value="ECO:0007669"/>
    <property type="project" value="UniProtKB-EC"/>
</dbReference>
<dbReference type="GO" id="GO:0043169">
    <property type="term" value="F:cation binding"/>
    <property type="evidence" value="ECO:0007669"/>
    <property type="project" value="InterPro"/>
</dbReference>
<dbReference type="GO" id="GO:0004553">
    <property type="term" value="F:hydrolase activity, hydrolyzing O-glycosyl compounds"/>
    <property type="evidence" value="ECO:0007669"/>
    <property type="project" value="InterPro"/>
</dbReference>
<dbReference type="GO" id="GO:0005978">
    <property type="term" value="P:glycogen biosynthetic process"/>
    <property type="evidence" value="ECO:0007669"/>
    <property type="project" value="UniProtKB-UniPathway"/>
</dbReference>
<dbReference type="CDD" id="cd11321">
    <property type="entry name" value="AmyAc_bac_euk_BE"/>
    <property type="match status" value="1"/>
</dbReference>
<dbReference type="CDD" id="cd02854">
    <property type="entry name" value="E_set_GBE_euk_N"/>
    <property type="match status" value="1"/>
</dbReference>
<dbReference type="FunFam" id="3.20.20.80:FF:000001">
    <property type="entry name" value="1,4-alpha-glucan branching enzyme"/>
    <property type="match status" value="1"/>
</dbReference>
<dbReference type="FunFam" id="2.60.40.1180:FF:000003">
    <property type="entry name" value="1,4-alpha-glucan-branching enzyme, chloroplastic/amyloplastic"/>
    <property type="match status" value="1"/>
</dbReference>
<dbReference type="Gene3D" id="3.20.20.80">
    <property type="entry name" value="Glycosidases"/>
    <property type="match status" value="1"/>
</dbReference>
<dbReference type="Gene3D" id="2.60.40.1180">
    <property type="entry name" value="Golgi alpha-mannosidase II"/>
    <property type="match status" value="1"/>
</dbReference>
<dbReference type="Gene3D" id="2.60.40.10">
    <property type="entry name" value="Immunoglobulins"/>
    <property type="match status" value="1"/>
</dbReference>
<dbReference type="InterPro" id="IPR006048">
    <property type="entry name" value="A-amylase/branching_C"/>
</dbReference>
<dbReference type="InterPro" id="IPR037439">
    <property type="entry name" value="Branching_enzy"/>
</dbReference>
<dbReference type="InterPro" id="IPR006047">
    <property type="entry name" value="Glyco_hydro_13_cat_dom"/>
</dbReference>
<dbReference type="InterPro" id="IPR004193">
    <property type="entry name" value="Glyco_hydro_13_N"/>
</dbReference>
<dbReference type="InterPro" id="IPR013780">
    <property type="entry name" value="Glyco_hydro_b"/>
</dbReference>
<dbReference type="InterPro" id="IPR017853">
    <property type="entry name" value="Glycoside_hydrolase_SF"/>
</dbReference>
<dbReference type="InterPro" id="IPR013783">
    <property type="entry name" value="Ig-like_fold"/>
</dbReference>
<dbReference type="InterPro" id="IPR014756">
    <property type="entry name" value="Ig_E-set"/>
</dbReference>
<dbReference type="PANTHER" id="PTHR43651">
    <property type="entry name" value="1,4-ALPHA-GLUCAN-BRANCHING ENZYME"/>
    <property type="match status" value="1"/>
</dbReference>
<dbReference type="PANTHER" id="PTHR43651:SF3">
    <property type="entry name" value="1,4-ALPHA-GLUCAN-BRANCHING ENZYME"/>
    <property type="match status" value="1"/>
</dbReference>
<dbReference type="Pfam" id="PF00128">
    <property type="entry name" value="Alpha-amylase"/>
    <property type="match status" value="1"/>
</dbReference>
<dbReference type="Pfam" id="PF02806">
    <property type="entry name" value="Alpha-amylase_C"/>
    <property type="match status" value="1"/>
</dbReference>
<dbReference type="Pfam" id="PF02922">
    <property type="entry name" value="CBM_48"/>
    <property type="match status" value="1"/>
</dbReference>
<dbReference type="PIRSF" id="PIRSF000463">
    <property type="entry name" value="GlgB"/>
    <property type="match status" value="1"/>
</dbReference>
<dbReference type="SMART" id="SM00642">
    <property type="entry name" value="Aamy"/>
    <property type="match status" value="1"/>
</dbReference>
<dbReference type="SUPFAM" id="SSF51445">
    <property type="entry name" value="(Trans)glycosidases"/>
    <property type="match status" value="1"/>
</dbReference>
<dbReference type="SUPFAM" id="SSF81296">
    <property type="entry name" value="E set domains"/>
    <property type="match status" value="1"/>
</dbReference>
<dbReference type="SUPFAM" id="SSF51011">
    <property type="entry name" value="Glycosyl hydrolase domain"/>
    <property type="match status" value="1"/>
</dbReference>
<feature type="chain" id="PRO_0000188781" description="1,4-alpha-glucan-branching enzyme">
    <location>
        <begin position="1"/>
        <end position="711"/>
    </location>
</feature>
<feature type="active site" description="Nucleophile" evidence="2">
    <location>
        <position position="353"/>
    </location>
</feature>
<feature type="active site" description="Proton donor" evidence="2">
    <location>
        <position position="414"/>
    </location>
</feature>
<feature type="binding site" evidence="3">
    <location>
        <position position="98"/>
    </location>
    <ligand>
        <name>(1,4-alpha-D-glucosyl)n</name>
        <dbReference type="ChEBI" id="CHEBI:15444"/>
    </ligand>
</feature>
<feature type="binding site" evidence="3">
    <location>
        <position position="135"/>
    </location>
    <ligand>
        <name>(1,4-alpha-D-glucosyl)n</name>
        <dbReference type="ChEBI" id="CHEBI:15444"/>
    </ligand>
</feature>
<feature type="site" description="Transition state stabilizer" evidence="2">
    <location>
        <position position="483"/>
    </location>
</feature>
<sequence>MSLSTGSTGSERSNQSLIKGALDLDPWLEPFSGQLIHRQLNLRKWYDEFKQNEGSLTNFASAYEKYGLHANWDTKEVFINEYIPNVVEVSLVGDFNNWDTNTHKLKPVNDFGLWSLTIKPTENNEFAVPHDSRYKISMVTASGERIYRLCPWLKRATPSTENNLYEGRFWNPQPTETYKFKHERPRLESKDGIKIYEAHVGISTPEPKVGSYKNFTTKVLPVIHKLGYNTIQLMAVMEHAYYASFGYQVTNFFAISSRFGTPEDLKELIDEAHRLGIRVLLDVVHSHSSKNVEDGLNMFNGTDHYLFHGGTKGSHELWDSRLFNYSNYETLRFLLSNLRFYIDVFKFDGFRFDGVTSMLYKHHGLSFGFSGDYNEYFNSEWVDNDAITYLMLGHKLLDEISVRENNYKFVSIAEDVSGMPTLCLPIGQGGIGFDYRLSMAIPDMWIKIIKHLSDEEWDMGSLVHTLTNRRHGERCISYCESHDQALVGDKTIAFWLMDKEMYTNMSTLTPFTPVIDRGIALHKMIRLITFSLGGEGYLNFEGNEFGHPEWLDFPRKGNGESYAYARRQFNLIEDDLLRYKFLFAFDGAMQHLDTKYGILLSSQAYVSLKNENDKVIVFERNGLLFIFNFHPTNSYADYKIGVETPGVYQIVLNSDSLSFGGHGRIEETNKETGEKLQFFTNNERWNDRSNALFCYIPSRTAIVLQVKEKVV</sequence>
<organism>
    <name type="scientific">Debaryomyces hansenii (strain ATCC 36239 / CBS 767 / BCRC 21394 / JCM 1990 / NBRC 0083 / IGC 2968)</name>
    <name type="common">Yeast</name>
    <name type="synonym">Torulaspora hansenii</name>
    <dbReference type="NCBI Taxonomy" id="284592"/>
    <lineage>
        <taxon>Eukaryota</taxon>
        <taxon>Fungi</taxon>
        <taxon>Dikarya</taxon>
        <taxon>Ascomycota</taxon>
        <taxon>Saccharomycotina</taxon>
        <taxon>Pichiomycetes</taxon>
        <taxon>Debaryomycetaceae</taxon>
        <taxon>Debaryomyces</taxon>
    </lineage>
</organism>
<accession>Q6BXN1</accession>
<reference key="1">
    <citation type="journal article" date="2004" name="Nature">
        <title>Genome evolution in yeasts.</title>
        <authorList>
            <person name="Dujon B."/>
            <person name="Sherman D."/>
            <person name="Fischer G."/>
            <person name="Durrens P."/>
            <person name="Casaregola S."/>
            <person name="Lafontaine I."/>
            <person name="de Montigny J."/>
            <person name="Marck C."/>
            <person name="Neuveglise C."/>
            <person name="Talla E."/>
            <person name="Goffard N."/>
            <person name="Frangeul L."/>
            <person name="Aigle M."/>
            <person name="Anthouard V."/>
            <person name="Babour A."/>
            <person name="Barbe V."/>
            <person name="Barnay S."/>
            <person name="Blanchin S."/>
            <person name="Beckerich J.-M."/>
            <person name="Beyne E."/>
            <person name="Bleykasten C."/>
            <person name="Boisrame A."/>
            <person name="Boyer J."/>
            <person name="Cattolico L."/>
            <person name="Confanioleri F."/>
            <person name="de Daruvar A."/>
            <person name="Despons L."/>
            <person name="Fabre E."/>
            <person name="Fairhead C."/>
            <person name="Ferry-Dumazet H."/>
            <person name="Groppi A."/>
            <person name="Hantraye F."/>
            <person name="Hennequin C."/>
            <person name="Jauniaux N."/>
            <person name="Joyet P."/>
            <person name="Kachouri R."/>
            <person name="Kerrest A."/>
            <person name="Koszul R."/>
            <person name="Lemaire M."/>
            <person name="Lesur I."/>
            <person name="Ma L."/>
            <person name="Muller H."/>
            <person name="Nicaud J.-M."/>
            <person name="Nikolski M."/>
            <person name="Oztas S."/>
            <person name="Ozier-Kalogeropoulos O."/>
            <person name="Pellenz S."/>
            <person name="Potier S."/>
            <person name="Richard G.-F."/>
            <person name="Straub M.-L."/>
            <person name="Suleau A."/>
            <person name="Swennen D."/>
            <person name="Tekaia F."/>
            <person name="Wesolowski-Louvel M."/>
            <person name="Westhof E."/>
            <person name="Wirth B."/>
            <person name="Zeniou-Meyer M."/>
            <person name="Zivanovic Y."/>
            <person name="Bolotin-Fukuhara M."/>
            <person name="Thierry A."/>
            <person name="Bouchier C."/>
            <person name="Caudron B."/>
            <person name="Scarpelli C."/>
            <person name="Gaillardin C."/>
            <person name="Weissenbach J."/>
            <person name="Wincker P."/>
            <person name="Souciet J.-L."/>
        </authorList>
    </citation>
    <scope>NUCLEOTIDE SEQUENCE [LARGE SCALE GENOMIC DNA]</scope>
    <source>
        <strain>ATCC 36239 / CBS 767 / BCRC 21394 / JCM 1990 / NBRC 0083 / IGC 2968</strain>
    </source>
</reference>
<gene>
    <name type="primary">GLC3</name>
    <name type="ordered locus">DEHA2B01672g</name>
</gene>
<protein>
    <recommendedName>
        <fullName>1,4-alpha-glucan-branching enzyme</fullName>
        <ecNumber evidence="2">2.4.1.18</ecNumber>
    </recommendedName>
    <alternativeName>
        <fullName>Glycogen-branching enzyme</fullName>
    </alternativeName>
</protein>
<proteinExistence type="inferred from homology"/>